<dbReference type="EC" id="1.1.1.17" evidence="1"/>
<dbReference type="EMBL" id="CU928160">
    <property type="protein sequence ID" value="CAR00567.1"/>
    <property type="molecule type" value="Genomic_DNA"/>
</dbReference>
<dbReference type="RefSeq" id="WP_000645424.1">
    <property type="nucleotide sequence ID" value="NC_011741.1"/>
</dbReference>
<dbReference type="SMR" id="B7M3M7"/>
<dbReference type="KEGG" id="ecr:ECIAI1_3770"/>
<dbReference type="HOGENOM" id="CLU_036089_2_0_6"/>
<dbReference type="GO" id="GO:0005829">
    <property type="term" value="C:cytosol"/>
    <property type="evidence" value="ECO:0007669"/>
    <property type="project" value="TreeGrafter"/>
</dbReference>
<dbReference type="GO" id="GO:0008926">
    <property type="term" value="F:mannitol-1-phosphate 5-dehydrogenase activity"/>
    <property type="evidence" value="ECO:0007669"/>
    <property type="project" value="UniProtKB-UniRule"/>
</dbReference>
<dbReference type="GO" id="GO:0019592">
    <property type="term" value="P:mannitol catabolic process"/>
    <property type="evidence" value="ECO:0007669"/>
    <property type="project" value="TreeGrafter"/>
</dbReference>
<dbReference type="FunFam" id="1.10.1040.10:FF:000009">
    <property type="entry name" value="Mannitol-1-phosphate 5-dehydrogenase"/>
    <property type="match status" value="1"/>
</dbReference>
<dbReference type="FunFam" id="3.40.50.720:FF:000075">
    <property type="entry name" value="Mannitol-1-phosphate 5-dehydrogenase"/>
    <property type="match status" value="1"/>
</dbReference>
<dbReference type="Gene3D" id="1.10.1040.10">
    <property type="entry name" value="N-(1-d-carboxylethyl)-l-norvaline Dehydrogenase, domain 2"/>
    <property type="match status" value="1"/>
</dbReference>
<dbReference type="Gene3D" id="3.40.50.720">
    <property type="entry name" value="NAD(P)-binding Rossmann-like Domain"/>
    <property type="match status" value="1"/>
</dbReference>
<dbReference type="HAMAP" id="MF_00196">
    <property type="entry name" value="Mannitol_dehydrog"/>
    <property type="match status" value="1"/>
</dbReference>
<dbReference type="InterPro" id="IPR008927">
    <property type="entry name" value="6-PGluconate_DH-like_C_sf"/>
</dbReference>
<dbReference type="InterPro" id="IPR013328">
    <property type="entry name" value="6PGD_dom2"/>
</dbReference>
<dbReference type="InterPro" id="IPR023028">
    <property type="entry name" value="Mannitol_1_phos_5_DH"/>
</dbReference>
<dbReference type="InterPro" id="IPR000669">
    <property type="entry name" value="Mannitol_DH"/>
</dbReference>
<dbReference type="InterPro" id="IPR013118">
    <property type="entry name" value="Mannitol_DH_C"/>
</dbReference>
<dbReference type="InterPro" id="IPR023027">
    <property type="entry name" value="Mannitol_DH_CS"/>
</dbReference>
<dbReference type="InterPro" id="IPR013131">
    <property type="entry name" value="Mannitol_DH_N"/>
</dbReference>
<dbReference type="InterPro" id="IPR036291">
    <property type="entry name" value="NAD(P)-bd_dom_sf"/>
</dbReference>
<dbReference type="NCBIfam" id="NF002646">
    <property type="entry name" value="PRK02318.1-2"/>
    <property type="match status" value="1"/>
</dbReference>
<dbReference type="NCBIfam" id="NF002647">
    <property type="entry name" value="PRK02318.1-3"/>
    <property type="match status" value="1"/>
</dbReference>
<dbReference type="NCBIfam" id="NF002648">
    <property type="entry name" value="PRK02318.1-4"/>
    <property type="match status" value="1"/>
</dbReference>
<dbReference type="NCBIfam" id="NF002650">
    <property type="entry name" value="PRK02318.2-2"/>
    <property type="match status" value="1"/>
</dbReference>
<dbReference type="NCBIfam" id="NF002652">
    <property type="entry name" value="PRK02318.2-5"/>
    <property type="match status" value="1"/>
</dbReference>
<dbReference type="PANTHER" id="PTHR30524:SF0">
    <property type="entry name" value="ALTRONATE OXIDOREDUCTASE-RELATED"/>
    <property type="match status" value="1"/>
</dbReference>
<dbReference type="PANTHER" id="PTHR30524">
    <property type="entry name" value="MANNITOL-1-PHOSPHATE 5-DEHYDROGENASE"/>
    <property type="match status" value="1"/>
</dbReference>
<dbReference type="Pfam" id="PF01232">
    <property type="entry name" value="Mannitol_dh"/>
    <property type="match status" value="1"/>
</dbReference>
<dbReference type="Pfam" id="PF08125">
    <property type="entry name" value="Mannitol_dh_C"/>
    <property type="match status" value="1"/>
</dbReference>
<dbReference type="PRINTS" id="PR00084">
    <property type="entry name" value="MTLDHDRGNASE"/>
</dbReference>
<dbReference type="SUPFAM" id="SSF48179">
    <property type="entry name" value="6-phosphogluconate dehydrogenase C-terminal domain-like"/>
    <property type="match status" value="1"/>
</dbReference>
<dbReference type="SUPFAM" id="SSF51735">
    <property type="entry name" value="NAD(P)-binding Rossmann-fold domains"/>
    <property type="match status" value="1"/>
</dbReference>
<dbReference type="PROSITE" id="PS00974">
    <property type="entry name" value="MANNITOL_DHGENASE"/>
    <property type="match status" value="1"/>
</dbReference>
<gene>
    <name evidence="1" type="primary">mtlD</name>
    <name type="ordered locus">ECIAI1_3770</name>
</gene>
<accession>B7M3M7</accession>
<organism>
    <name type="scientific">Escherichia coli O8 (strain IAI1)</name>
    <dbReference type="NCBI Taxonomy" id="585034"/>
    <lineage>
        <taxon>Bacteria</taxon>
        <taxon>Pseudomonadati</taxon>
        <taxon>Pseudomonadota</taxon>
        <taxon>Gammaproteobacteria</taxon>
        <taxon>Enterobacterales</taxon>
        <taxon>Enterobacteriaceae</taxon>
        <taxon>Escherichia</taxon>
    </lineage>
</organism>
<comment type="catalytic activity">
    <reaction evidence="1">
        <text>D-mannitol 1-phosphate + NAD(+) = beta-D-fructose 6-phosphate + NADH + H(+)</text>
        <dbReference type="Rhea" id="RHEA:19661"/>
        <dbReference type="ChEBI" id="CHEBI:15378"/>
        <dbReference type="ChEBI" id="CHEBI:57540"/>
        <dbReference type="ChEBI" id="CHEBI:57634"/>
        <dbReference type="ChEBI" id="CHEBI:57945"/>
        <dbReference type="ChEBI" id="CHEBI:61381"/>
        <dbReference type="EC" id="1.1.1.17"/>
    </reaction>
</comment>
<comment type="similarity">
    <text evidence="1">Belongs to the mannitol dehydrogenase family.</text>
</comment>
<name>MTLD_ECO8A</name>
<evidence type="ECO:0000255" key="1">
    <source>
        <dbReference type="HAMAP-Rule" id="MF_00196"/>
    </source>
</evidence>
<keyword id="KW-0007">Acetylation</keyword>
<keyword id="KW-0520">NAD</keyword>
<keyword id="KW-0560">Oxidoreductase</keyword>
<sequence length="382" mass="41139">MKALHFGAGNIGRGFIGKLLADAGIQLTFADVNQVVLDALNARHSYQVHVVGETEQVDTVSGVNAVSSIGDDVVDLIAQVDLVTTAVGPVVLERIAPAIAKGLVKRKEQGNESPLNIIACENMVRGTTQLKGHVMNALPEDAKAWVEEHVGFVDSAVDRIVPPSASATNDPLEVTVETFSEWIVDKTQFKGALPNIPGMELTDNLMAFVERKLFTLNTGHAITAYLGKLAGHQTIRDAILDEKIRAVVKGAMEESGAVLIKRYGFDADKHAAYIQKILGRFENPYLKDDVERVGRQPLRKLSAGDRLIKPLLGTLEYSLPHKNLIQGIAGAMHFRSEDDPQAQELAALIADKGPQAALAQISGLDANSEVVSEAVTAYKAMQ</sequence>
<reference key="1">
    <citation type="journal article" date="2009" name="PLoS Genet.">
        <title>Organised genome dynamics in the Escherichia coli species results in highly diverse adaptive paths.</title>
        <authorList>
            <person name="Touchon M."/>
            <person name="Hoede C."/>
            <person name="Tenaillon O."/>
            <person name="Barbe V."/>
            <person name="Baeriswyl S."/>
            <person name="Bidet P."/>
            <person name="Bingen E."/>
            <person name="Bonacorsi S."/>
            <person name="Bouchier C."/>
            <person name="Bouvet O."/>
            <person name="Calteau A."/>
            <person name="Chiapello H."/>
            <person name="Clermont O."/>
            <person name="Cruveiller S."/>
            <person name="Danchin A."/>
            <person name="Diard M."/>
            <person name="Dossat C."/>
            <person name="Karoui M.E."/>
            <person name="Frapy E."/>
            <person name="Garry L."/>
            <person name="Ghigo J.M."/>
            <person name="Gilles A.M."/>
            <person name="Johnson J."/>
            <person name="Le Bouguenec C."/>
            <person name="Lescat M."/>
            <person name="Mangenot S."/>
            <person name="Martinez-Jehanne V."/>
            <person name="Matic I."/>
            <person name="Nassif X."/>
            <person name="Oztas S."/>
            <person name="Petit M.A."/>
            <person name="Pichon C."/>
            <person name="Rouy Z."/>
            <person name="Ruf C.S."/>
            <person name="Schneider D."/>
            <person name="Tourret J."/>
            <person name="Vacherie B."/>
            <person name="Vallenet D."/>
            <person name="Medigue C."/>
            <person name="Rocha E.P.C."/>
            <person name="Denamur E."/>
        </authorList>
    </citation>
    <scope>NUCLEOTIDE SEQUENCE [LARGE SCALE GENOMIC DNA]</scope>
    <source>
        <strain>IAI1</strain>
    </source>
</reference>
<proteinExistence type="inferred from homology"/>
<protein>
    <recommendedName>
        <fullName evidence="1">Mannitol-1-phosphate 5-dehydrogenase</fullName>
        <ecNumber evidence="1">1.1.1.17</ecNumber>
    </recommendedName>
</protein>
<feature type="chain" id="PRO_1000118656" description="Mannitol-1-phosphate 5-dehydrogenase">
    <location>
        <begin position="1"/>
        <end position="382"/>
    </location>
</feature>
<feature type="binding site" evidence="1">
    <location>
        <begin position="3"/>
        <end position="14"/>
    </location>
    <ligand>
        <name>NAD(+)</name>
        <dbReference type="ChEBI" id="CHEBI:57540"/>
    </ligand>
</feature>
<feature type="modified residue" description="N6-acetyllysine" evidence="1">
    <location>
        <position position="269"/>
    </location>
</feature>